<keyword id="KW-0150">Chloroplast</keyword>
<keyword id="KW-0934">Plastid</keyword>
<keyword id="KW-0687">Ribonucleoprotein</keyword>
<keyword id="KW-0689">Ribosomal protein</keyword>
<reference key="1">
    <citation type="journal article" date="2008" name="BMC Evol. Biol.">
        <title>The complete plastid genome sequence of Welwitschia mirabilis: an unusually compact plastome with accelerated divergence rates.</title>
        <authorList>
            <person name="McCoy S.R."/>
            <person name="Kuehl J.V."/>
            <person name="Boore J.L."/>
            <person name="Raubeson L.A."/>
        </authorList>
    </citation>
    <scope>NUCLEOTIDE SEQUENCE [LARGE SCALE GENOMIC DNA]</scope>
</reference>
<reference key="2">
    <citation type="journal article" date="2009" name="Mol. Phylogenet. Evol.">
        <title>Evolution of reduced and compact chloroplast genomes (cpDNAs) in gnetophytes: Selection toward a lower-cost strategy.</title>
        <authorList>
            <person name="Wu C.-S."/>
            <person name="Lai Y.-T."/>
            <person name="Lin C.-P."/>
            <person name="Wang Y.-N."/>
            <person name="Chaw S.-M."/>
        </authorList>
    </citation>
    <scope>NUCLEOTIDE SEQUENCE [LARGE SCALE GENOMIC DNA]</scope>
</reference>
<organism>
    <name type="scientific">Welwitschia mirabilis</name>
    <name type="common">Tree tumbo</name>
    <name type="synonym">Welwitschia bainesii</name>
    <dbReference type="NCBI Taxonomy" id="3377"/>
    <lineage>
        <taxon>Eukaryota</taxon>
        <taxon>Viridiplantae</taxon>
        <taxon>Streptophyta</taxon>
        <taxon>Embryophyta</taxon>
        <taxon>Tracheophyta</taxon>
        <taxon>Spermatophyta</taxon>
        <taxon>Gnetopsida</taxon>
        <taxon>Gnetidae</taxon>
        <taxon>Welwitschiales</taxon>
        <taxon>Welwitschiaceae</taxon>
        <taxon>Welwitschia</taxon>
    </lineage>
</organism>
<dbReference type="EMBL" id="EU342371">
    <property type="protein sequence ID" value="ABY26810.1"/>
    <property type="molecule type" value="Genomic_DNA"/>
</dbReference>
<dbReference type="EMBL" id="AP009568">
    <property type="protein sequence ID" value="BAH11208.1"/>
    <property type="molecule type" value="Genomic_DNA"/>
</dbReference>
<dbReference type="RefSeq" id="YP_001876597.1">
    <property type="nucleotide sequence ID" value="NC_010654.1"/>
</dbReference>
<dbReference type="GeneID" id="6276156"/>
<dbReference type="GO" id="GO:0009507">
    <property type="term" value="C:chloroplast"/>
    <property type="evidence" value="ECO:0007669"/>
    <property type="project" value="UniProtKB-SubCell"/>
</dbReference>
<dbReference type="GO" id="GO:1990904">
    <property type="term" value="C:ribonucleoprotein complex"/>
    <property type="evidence" value="ECO:0007669"/>
    <property type="project" value="UniProtKB-KW"/>
</dbReference>
<dbReference type="GO" id="GO:0005840">
    <property type="term" value="C:ribosome"/>
    <property type="evidence" value="ECO:0007669"/>
    <property type="project" value="UniProtKB-KW"/>
</dbReference>
<dbReference type="GO" id="GO:0003735">
    <property type="term" value="F:structural constituent of ribosome"/>
    <property type="evidence" value="ECO:0007669"/>
    <property type="project" value="InterPro"/>
</dbReference>
<dbReference type="GO" id="GO:0006412">
    <property type="term" value="P:translation"/>
    <property type="evidence" value="ECO:0007669"/>
    <property type="project" value="UniProtKB-UniRule"/>
</dbReference>
<dbReference type="Gene3D" id="2.20.28.120">
    <property type="entry name" value="Ribosomal protein L33"/>
    <property type="match status" value="1"/>
</dbReference>
<dbReference type="HAMAP" id="MF_00294">
    <property type="entry name" value="Ribosomal_bL33"/>
    <property type="match status" value="1"/>
</dbReference>
<dbReference type="InterPro" id="IPR001705">
    <property type="entry name" value="Ribosomal_bL33"/>
</dbReference>
<dbReference type="InterPro" id="IPR018264">
    <property type="entry name" value="Ribosomal_bL33_CS"/>
</dbReference>
<dbReference type="InterPro" id="IPR038584">
    <property type="entry name" value="Ribosomal_bL33_sf"/>
</dbReference>
<dbReference type="InterPro" id="IPR011332">
    <property type="entry name" value="Ribosomal_zn-bd"/>
</dbReference>
<dbReference type="NCBIfam" id="NF001764">
    <property type="entry name" value="PRK00504.1"/>
    <property type="match status" value="1"/>
</dbReference>
<dbReference type="NCBIfam" id="NF001860">
    <property type="entry name" value="PRK00595.1"/>
    <property type="match status" value="1"/>
</dbReference>
<dbReference type="NCBIfam" id="TIGR01023">
    <property type="entry name" value="rpmG_bact"/>
    <property type="match status" value="1"/>
</dbReference>
<dbReference type="PANTHER" id="PTHR43168">
    <property type="entry name" value="50S RIBOSOMAL PROTEIN L33, CHLOROPLASTIC"/>
    <property type="match status" value="1"/>
</dbReference>
<dbReference type="PANTHER" id="PTHR43168:SF2">
    <property type="entry name" value="LARGE RIBOSOMAL SUBUNIT PROTEIN BL33C"/>
    <property type="match status" value="1"/>
</dbReference>
<dbReference type="Pfam" id="PF00471">
    <property type="entry name" value="Ribosomal_L33"/>
    <property type="match status" value="1"/>
</dbReference>
<dbReference type="SUPFAM" id="SSF57829">
    <property type="entry name" value="Zn-binding ribosomal proteins"/>
    <property type="match status" value="1"/>
</dbReference>
<dbReference type="PROSITE" id="PS00582">
    <property type="entry name" value="RIBOSOMAL_L33"/>
    <property type="match status" value="1"/>
</dbReference>
<protein>
    <recommendedName>
        <fullName evidence="1">Large ribosomal subunit protein bL33c</fullName>
    </recommendedName>
    <alternativeName>
        <fullName evidence="2">50S ribosomal protein L33, chloroplastic</fullName>
    </alternativeName>
</protein>
<name>RK33_WELMI</name>
<geneLocation type="chloroplast"/>
<gene>
    <name evidence="1" type="primary">rpl33</name>
</gene>
<accession>B2Y1Y0</accession>
<accession>B7ZI28</accession>
<evidence type="ECO:0000255" key="1">
    <source>
        <dbReference type="HAMAP-Rule" id="MF_00294"/>
    </source>
</evidence>
<evidence type="ECO:0000305" key="2"/>
<feature type="chain" id="PRO_0000356823" description="Large ribosomal subunit protein bL33c">
    <location>
        <begin position="1"/>
        <end position="66"/>
    </location>
</feature>
<sequence length="66" mass="7786">MPAKTGPRVVVFLECFHCTQKGAQKKFPGVFRYITKKNRHNKSTPLELKKFCPFCLKHTIHKERKK</sequence>
<comment type="subcellular location">
    <subcellularLocation>
        <location>Plastid</location>
        <location>Chloroplast</location>
    </subcellularLocation>
</comment>
<comment type="similarity">
    <text evidence="1">Belongs to the bacterial ribosomal protein bL33 family.</text>
</comment>
<proteinExistence type="inferred from homology"/>